<sequence>MPSGNLWKVLGLCLLSVGAWGQEDIERPDEDTQKTFKVSISGDKVELTCPEDPESEKMTWKRNDMQIYESYDNYMLLESFSEVENSGYYTCTVGEKTSHRLYLKARVCENCVEVDLMAVVTIIVVDICITLGLLMVVYYYSKSRKAKAMPVTRGAGAGGRPRGQNRERPPPVPNPDYEPIRKGQRDLYSGLNQRGR</sequence>
<dbReference type="EMBL" id="AY323829">
    <property type="protein sequence ID" value="AAP85530.1"/>
    <property type="molecule type" value="mRNA"/>
</dbReference>
<dbReference type="RefSeq" id="NP_999392.1">
    <property type="nucleotide sequence ID" value="NM_214227.1"/>
</dbReference>
<dbReference type="SMR" id="Q7YRN2"/>
<dbReference type="FunCoup" id="Q7YRN2">
    <property type="interactions" value="259"/>
</dbReference>
<dbReference type="STRING" id="9823.ENSSSCP00000016015"/>
<dbReference type="PaxDb" id="9823-ENSSSCP00000016015"/>
<dbReference type="PeptideAtlas" id="Q7YRN2"/>
<dbReference type="GeneID" id="397455"/>
<dbReference type="KEGG" id="ssc:397455"/>
<dbReference type="CTD" id="916"/>
<dbReference type="eggNOG" id="ENOG502S8KB">
    <property type="taxonomic scope" value="Eukaryota"/>
</dbReference>
<dbReference type="InParanoid" id="Q7YRN2"/>
<dbReference type="OrthoDB" id="9947847at2759"/>
<dbReference type="Proteomes" id="UP000008227">
    <property type="component" value="Unplaced"/>
</dbReference>
<dbReference type="Proteomes" id="UP000314985">
    <property type="component" value="Unplaced"/>
</dbReference>
<dbReference type="Proteomes" id="UP000694570">
    <property type="component" value="Unplaced"/>
</dbReference>
<dbReference type="Proteomes" id="UP000694571">
    <property type="component" value="Unplaced"/>
</dbReference>
<dbReference type="Proteomes" id="UP000694720">
    <property type="component" value="Unplaced"/>
</dbReference>
<dbReference type="Proteomes" id="UP000694722">
    <property type="component" value="Unplaced"/>
</dbReference>
<dbReference type="Proteomes" id="UP000694723">
    <property type="component" value="Unplaced"/>
</dbReference>
<dbReference type="Proteomes" id="UP000694724">
    <property type="component" value="Unplaced"/>
</dbReference>
<dbReference type="Proteomes" id="UP000694725">
    <property type="component" value="Unplaced"/>
</dbReference>
<dbReference type="Proteomes" id="UP000694726">
    <property type="component" value="Unplaced"/>
</dbReference>
<dbReference type="Proteomes" id="UP000694727">
    <property type="component" value="Unplaced"/>
</dbReference>
<dbReference type="Proteomes" id="UP000694728">
    <property type="component" value="Unplaced"/>
</dbReference>
<dbReference type="GO" id="GO:0042105">
    <property type="term" value="C:alpha-beta T cell receptor complex"/>
    <property type="evidence" value="ECO:0000318"/>
    <property type="project" value="GO_Central"/>
</dbReference>
<dbReference type="GO" id="GO:0009897">
    <property type="term" value="C:external side of plasma membrane"/>
    <property type="evidence" value="ECO:0000318"/>
    <property type="project" value="GO_Central"/>
</dbReference>
<dbReference type="GO" id="GO:0004888">
    <property type="term" value="F:transmembrane signaling receptor activity"/>
    <property type="evidence" value="ECO:0000318"/>
    <property type="project" value="GO_Central"/>
</dbReference>
<dbReference type="GO" id="GO:0002250">
    <property type="term" value="P:adaptive immune response"/>
    <property type="evidence" value="ECO:0007669"/>
    <property type="project" value="UniProtKB-KW"/>
</dbReference>
<dbReference type="GO" id="GO:0007166">
    <property type="term" value="P:cell surface receptor signaling pathway"/>
    <property type="evidence" value="ECO:0000318"/>
    <property type="project" value="GO_Central"/>
</dbReference>
<dbReference type="GO" id="GO:0045059">
    <property type="term" value="P:positive thymic T cell selection"/>
    <property type="evidence" value="ECO:0000318"/>
    <property type="project" value="GO_Central"/>
</dbReference>
<dbReference type="FunFam" id="2.60.40.10:FF:001422">
    <property type="entry name" value="T-cell surface glycoprotein CD3 epsilon chain"/>
    <property type="match status" value="1"/>
</dbReference>
<dbReference type="Gene3D" id="2.60.40.10">
    <property type="entry name" value="Immunoglobulins"/>
    <property type="match status" value="1"/>
</dbReference>
<dbReference type="InterPro" id="IPR015484">
    <property type="entry name" value="CD3_esu/gsu/dsu"/>
</dbReference>
<dbReference type="InterPro" id="IPR007110">
    <property type="entry name" value="Ig-like_dom"/>
</dbReference>
<dbReference type="InterPro" id="IPR036179">
    <property type="entry name" value="Ig-like_dom_sf"/>
</dbReference>
<dbReference type="InterPro" id="IPR013783">
    <property type="entry name" value="Ig-like_fold"/>
</dbReference>
<dbReference type="InterPro" id="IPR003598">
    <property type="entry name" value="Ig_sub2"/>
</dbReference>
<dbReference type="InterPro" id="IPR003110">
    <property type="entry name" value="Phos_immunorcpt_sig_ITAM"/>
</dbReference>
<dbReference type="PANTHER" id="PTHR10570:SF9">
    <property type="entry name" value="T-CELL SURFACE GLYCOPROTEIN CD3 EPSILON CHAIN"/>
    <property type="match status" value="1"/>
</dbReference>
<dbReference type="PANTHER" id="PTHR10570">
    <property type="entry name" value="T-CELL SURFACE GLYCOPROTEIN CD3 GAMMA CHAIN / DELTA CHAIN"/>
    <property type="match status" value="1"/>
</dbReference>
<dbReference type="Pfam" id="PF16681">
    <property type="entry name" value="Ig_5"/>
    <property type="match status" value="1"/>
</dbReference>
<dbReference type="Pfam" id="PF02189">
    <property type="entry name" value="ITAM"/>
    <property type="match status" value="1"/>
</dbReference>
<dbReference type="SMART" id="SM00408">
    <property type="entry name" value="IGc2"/>
    <property type="match status" value="1"/>
</dbReference>
<dbReference type="SMART" id="SM00077">
    <property type="entry name" value="ITAM"/>
    <property type="match status" value="1"/>
</dbReference>
<dbReference type="SUPFAM" id="SSF48726">
    <property type="entry name" value="Immunoglobulin"/>
    <property type="match status" value="1"/>
</dbReference>
<dbReference type="PROSITE" id="PS50835">
    <property type="entry name" value="IG_LIKE"/>
    <property type="match status" value="1"/>
</dbReference>
<dbReference type="PROSITE" id="PS51055">
    <property type="entry name" value="ITAM_1"/>
    <property type="match status" value="1"/>
</dbReference>
<comment type="function">
    <text evidence="1 2">Part of the TCR-CD3 complex present on T-lymphocyte cell surface that plays an essential role in adaptive immune response. When antigen presenting cells (APCs) activate T-cell receptor (TCR), TCR-mediated signals are transmitted across the cell membrane by the CD3 chains CD3D, CD3E, CD3G and CD3Z. All CD3 chains contain immunoreceptor tyrosine-based activation motifs (ITAMs) in their cytoplasmic domain. Upon TCR engagement, these motifs become phosphorylated by Src family protein tyrosine kinases LCK and FYN, resulting in the activation of downstream signaling pathways. In addition of this role of signal transduction in T-cell activation, CD3E plays an essential role in correct T-cell development. Also participates in internalization and cell surface down-regulation of TCR-CD3 complexes via endocytosis sequences present in CD3E cytosolic region (By similarity). In addition to its role as a TCR coreceptor, it serves as a receptor for ITPRIPL1. Ligand recognition inhibits T-cell activation by promoting interaction with NCK1, which prevents CD3E-ZAP70 interaction and blocks the ERK-NFkB signaling cascade and calcium influx (By similarity).</text>
</comment>
<comment type="subunit">
    <text evidence="1 2">The TCR-CD3 complex is composed of a CD3D/CD3E and a CD3G/CD3E heterodimers that preferentially associate with TCRalpha and TCRbeta, respectively, to form TCRalpha/CD3E/CD3G and TCRbeta/CD3G/CD3E trimers. In turn, the hexamer interacts with CD3Z homodimer to form the TCR-CD3 complex. Alternatively, TCRalpha and TCRbeta can be replaced by TCRgamma and TCRdelta. Interacts with CD6. Interacts (via Proline-rich sequence) with NCK1; the interaction is ligand dependent but independent of tyrosine kinase activation.</text>
</comment>
<comment type="subcellular location">
    <subcellularLocation>
        <location evidence="1">Cell membrane</location>
        <topology evidence="1">Single-pass type I membrane protein</topology>
    </subcellularLocation>
</comment>
<comment type="PTM">
    <text evidence="1">Phosphorylated on Tyr residues after T-cell receptor triggering by LCK in association with CD4/CD8.</text>
</comment>
<gene>
    <name type="primary">CD3E</name>
</gene>
<evidence type="ECO:0000250" key="1">
    <source>
        <dbReference type="UniProtKB" id="P07766"/>
    </source>
</evidence>
<evidence type="ECO:0000250" key="2">
    <source>
        <dbReference type="UniProtKB" id="P22646"/>
    </source>
</evidence>
<evidence type="ECO:0000255" key="3"/>
<evidence type="ECO:0000255" key="4">
    <source>
        <dbReference type="PROSITE-ProRule" id="PRU00114"/>
    </source>
</evidence>
<evidence type="ECO:0000255" key="5">
    <source>
        <dbReference type="PROSITE-ProRule" id="PRU00379"/>
    </source>
</evidence>
<evidence type="ECO:0000256" key="6">
    <source>
        <dbReference type="SAM" id="MobiDB-lite"/>
    </source>
</evidence>
<proteinExistence type="evidence at transcript level"/>
<reference key="1">
    <citation type="submission" date="2003-06" db="EMBL/GenBank/DDBJ databases">
        <title>Cloning and sequencing of porcine CD3 epsilon.</title>
        <authorList>
            <person name="Wang J."/>
            <person name="Yang H."/>
            <person name="Guo X."/>
        </authorList>
    </citation>
    <scope>NUCLEOTIDE SEQUENCE [MRNA]</scope>
</reference>
<protein>
    <recommendedName>
        <fullName>T-cell surface glycoprotein CD3 epsilon chain</fullName>
    </recommendedName>
    <cdAntigenName>CD3e</cdAntigenName>
</protein>
<organism>
    <name type="scientific">Sus scrofa</name>
    <name type="common">Pig</name>
    <dbReference type="NCBI Taxonomy" id="9823"/>
    <lineage>
        <taxon>Eukaryota</taxon>
        <taxon>Metazoa</taxon>
        <taxon>Chordata</taxon>
        <taxon>Craniata</taxon>
        <taxon>Vertebrata</taxon>
        <taxon>Euteleostomi</taxon>
        <taxon>Mammalia</taxon>
        <taxon>Eutheria</taxon>
        <taxon>Laurasiatheria</taxon>
        <taxon>Artiodactyla</taxon>
        <taxon>Suina</taxon>
        <taxon>Suidae</taxon>
        <taxon>Sus</taxon>
    </lineage>
</organism>
<accession>Q7YRN2</accession>
<feature type="signal peptide" evidence="3">
    <location>
        <begin position="1"/>
        <end position="21"/>
    </location>
</feature>
<feature type="chain" id="PRO_0000014610" description="T-cell surface glycoprotein CD3 epsilon chain">
    <location>
        <begin position="22"/>
        <end position="196"/>
    </location>
</feature>
<feature type="topological domain" description="Extracellular" evidence="3">
    <location>
        <begin position="22"/>
        <end position="116"/>
    </location>
</feature>
<feature type="transmembrane region" description="Helical" evidence="3">
    <location>
        <begin position="117"/>
        <end position="137"/>
    </location>
</feature>
<feature type="topological domain" description="Cytoplasmic" evidence="3">
    <location>
        <begin position="138"/>
        <end position="196"/>
    </location>
</feature>
<feature type="domain" description="Ig-like">
    <location>
        <begin position="28"/>
        <end position="102"/>
    </location>
</feature>
<feature type="domain" description="ITAM" evidence="5">
    <location>
        <begin position="167"/>
        <end position="194"/>
    </location>
</feature>
<feature type="region of interest" description="Disordered" evidence="6">
    <location>
        <begin position="150"/>
        <end position="196"/>
    </location>
</feature>
<feature type="region of interest" description="NUMB-binding region" evidence="1">
    <location>
        <begin position="164"/>
        <end position="181"/>
    </location>
</feature>
<feature type="region of interest" description="Proline-rich sequence" evidence="1">
    <location>
        <begin position="168"/>
        <end position="175"/>
    </location>
</feature>
<feature type="modified residue" description="Phosphotyrosine" evidence="1 5">
    <location>
        <position position="177"/>
    </location>
</feature>
<feature type="modified residue" description="Phosphotyrosine" evidence="1 5">
    <location>
        <position position="188"/>
    </location>
</feature>
<feature type="disulfide bond" evidence="4">
    <location>
        <begin position="49"/>
        <end position="91"/>
    </location>
</feature>
<name>CD3E_PIG</name>
<keyword id="KW-1064">Adaptive immunity</keyword>
<keyword id="KW-1003">Cell membrane</keyword>
<keyword id="KW-1015">Disulfide bond</keyword>
<keyword id="KW-0391">Immunity</keyword>
<keyword id="KW-0393">Immunoglobulin domain</keyword>
<keyword id="KW-0472">Membrane</keyword>
<keyword id="KW-0597">Phosphoprotein</keyword>
<keyword id="KW-0675">Receptor</keyword>
<keyword id="KW-1185">Reference proteome</keyword>
<keyword id="KW-0732">Signal</keyword>
<keyword id="KW-0812">Transmembrane</keyword>
<keyword id="KW-1133">Transmembrane helix</keyword>